<keyword id="KW-0066">ATP synthesis</keyword>
<keyword id="KW-0997">Cell inner membrane</keyword>
<keyword id="KW-1003">Cell membrane</keyword>
<keyword id="KW-0139">CF(1)</keyword>
<keyword id="KW-0375">Hydrogen ion transport</keyword>
<keyword id="KW-0406">Ion transport</keyword>
<keyword id="KW-0472">Membrane</keyword>
<keyword id="KW-0813">Transport</keyword>
<proteinExistence type="inferred from homology"/>
<organism>
    <name type="scientific">Rickettsia rickettsii (strain Sheila Smith)</name>
    <dbReference type="NCBI Taxonomy" id="392021"/>
    <lineage>
        <taxon>Bacteria</taxon>
        <taxon>Pseudomonadati</taxon>
        <taxon>Pseudomonadota</taxon>
        <taxon>Alphaproteobacteria</taxon>
        <taxon>Rickettsiales</taxon>
        <taxon>Rickettsiaceae</taxon>
        <taxon>Rickettsieae</taxon>
        <taxon>Rickettsia</taxon>
        <taxon>spotted fever group</taxon>
    </lineage>
</organism>
<dbReference type="EMBL" id="CP000848">
    <property type="protein sequence ID" value="ABV76804.1"/>
    <property type="molecule type" value="Genomic_DNA"/>
</dbReference>
<dbReference type="RefSeq" id="WP_012151346.1">
    <property type="nucleotide sequence ID" value="NZ_CP121767.1"/>
</dbReference>
<dbReference type="SMR" id="A8GTS9"/>
<dbReference type="GeneID" id="79937848"/>
<dbReference type="KEGG" id="rri:A1G_06775"/>
<dbReference type="HOGENOM" id="CLU_085114_1_1_5"/>
<dbReference type="Proteomes" id="UP000006832">
    <property type="component" value="Chromosome"/>
</dbReference>
<dbReference type="GO" id="GO:0005886">
    <property type="term" value="C:plasma membrane"/>
    <property type="evidence" value="ECO:0007669"/>
    <property type="project" value="UniProtKB-SubCell"/>
</dbReference>
<dbReference type="GO" id="GO:0045259">
    <property type="term" value="C:proton-transporting ATP synthase complex"/>
    <property type="evidence" value="ECO:0007669"/>
    <property type="project" value="UniProtKB-KW"/>
</dbReference>
<dbReference type="GO" id="GO:0046933">
    <property type="term" value="F:proton-transporting ATP synthase activity, rotational mechanism"/>
    <property type="evidence" value="ECO:0007669"/>
    <property type="project" value="UniProtKB-UniRule"/>
</dbReference>
<dbReference type="Gene3D" id="1.10.520.20">
    <property type="entry name" value="N-terminal domain of the delta subunit of the F1F0-ATP synthase"/>
    <property type="match status" value="1"/>
</dbReference>
<dbReference type="HAMAP" id="MF_01416">
    <property type="entry name" value="ATP_synth_delta_bact"/>
    <property type="match status" value="1"/>
</dbReference>
<dbReference type="InterPro" id="IPR026015">
    <property type="entry name" value="ATP_synth_OSCP/delta_N_sf"/>
</dbReference>
<dbReference type="InterPro" id="IPR000711">
    <property type="entry name" value="ATPase_OSCP/dsu"/>
</dbReference>
<dbReference type="NCBIfam" id="TIGR01145">
    <property type="entry name" value="ATP_synt_delta"/>
    <property type="match status" value="1"/>
</dbReference>
<dbReference type="PANTHER" id="PTHR11910">
    <property type="entry name" value="ATP SYNTHASE DELTA CHAIN"/>
    <property type="match status" value="1"/>
</dbReference>
<dbReference type="Pfam" id="PF00213">
    <property type="entry name" value="OSCP"/>
    <property type="match status" value="1"/>
</dbReference>
<dbReference type="PRINTS" id="PR00125">
    <property type="entry name" value="ATPASEDELTA"/>
</dbReference>
<dbReference type="SUPFAM" id="SSF47928">
    <property type="entry name" value="N-terminal domain of the delta subunit of the F1F0-ATP synthase"/>
    <property type="match status" value="1"/>
</dbReference>
<accession>A8GTS9</accession>
<protein>
    <recommendedName>
        <fullName evidence="1">ATP synthase subunit delta</fullName>
    </recommendedName>
    <alternativeName>
        <fullName evidence="1">ATP synthase F(1) sector subunit delta</fullName>
    </alternativeName>
    <alternativeName>
        <fullName evidence="1">F-type ATPase subunit delta</fullName>
        <shortName evidence="1">F-ATPase subunit delta</shortName>
    </alternativeName>
</protein>
<comment type="function">
    <text evidence="1">F(1)F(0) ATP synthase produces ATP from ADP in the presence of a proton or sodium gradient. F-type ATPases consist of two structural domains, F(1) containing the extramembraneous catalytic core and F(0) containing the membrane proton channel, linked together by a central stalk and a peripheral stalk. During catalysis, ATP synthesis in the catalytic domain of F(1) is coupled via a rotary mechanism of the central stalk subunits to proton translocation.</text>
</comment>
<comment type="function">
    <text evidence="1">This protein is part of the stalk that links CF(0) to CF(1). It either transmits conformational changes from CF(0) to CF(1) or is implicated in proton conduction.</text>
</comment>
<comment type="subunit">
    <text evidence="1">F-type ATPases have 2 components, F(1) - the catalytic core - and F(0) - the membrane proton channel. F(1) has five subunits: alpha(3), beta(3), gamma(1), delta(1), epsilon(1). F(0) has three main subunits: a(1), b(2) and c(10-14). The alpha and beta chains form an alternating ring which encloses part of the gamma chain. F(1) is attached to F(0) by a central stalk formed by the gamma and epsilon chains, while a peripheral stalk is formed by the delta and b chains.</text>
</comment>
<comment type="subcellular location">
    <subcellularLocation>
        <location evidence="1">Cell inner membrane</location>
        <topology evidence="1">Peripheral membrane protein</topology>
    </subcellularLocation>
</comment>
<comment type="similarity">
    <text evidence="1">Belongs to the ATPase delta chain family.</text>
</comment>
<gene>
    <name evidence="1" type="primary">atpH</name>
    <name type="ordered locus">A1G_06775</name>
</gene>
<evidence type="ECO:0000255" key="1">
    <source>
        <dbReference type="HAMAP-Rule" id="MF_01416"/>
    </source>
</evidence>
<reference key="1">
    <citation type="submission" date="2007-09" db="EMBL/GenBank/DDBJ databases">
        <title>Complete genome sequence of Rickettsia rickettsii.</title>
        <authorList>
            <person name="Madan A."/>
            <person name="Fahey J."/>
            <person name="Helton E."/>
            <person name="Ketteman M."/>
            <person name="Madan A."/>
            <person name="Rodrigues S."/>
            <person name="Sanchez A."/>
            <person name="Dasch G."/>
            <person name="Eremeeva M."/>
        </authorList>
    </citation>
    <scope>NUCLEOTIDE SEQUENCE [LARGE SCALE GENOMIC DNA]</scope>
    <source>
        <strain>Sheila Smith</strain>
    </source>
</reference>
<feature type="chain" id="PRO_0000371104" description="ATP synthase subunit delta">
    <location>
        <begin position="1"/>
        <end position="184"/>
    </location>
</feature>
<sequence length="184" mass="20946">MNKGNLIKNYAVALFNNAIVDNIQDKIFEEITSINRIITDNFDIREFLFSPIVNKNDKINAVNSLAKNIKISTIVQNFLLLLVKNSRTAILSNIVDAYNTLLYESKNIKIVQVISANKLQPKEQEWIKSRIEKELNQKTEILFDIDNTIIGGIVIKYDSMLQDYSIKGSLEKITKALKTVNIAV</sequence>
<name>ATPD_RICRS</name>